<dbReference type="EMBL" id="CP000875">
    <property type="protein sequence ID" value="ABX04441.1"/>
    <property type="molecule type" value="Genomic_DNA"/>
</dbReference>
<dbReference type="SMR" id="A9B7R3"/>
<dbReference type="FunCoup" id="A9B7R3">
    <property type="interactions" value="14"/>
</dbReference>
<dbReference type="KEGG" id="hau:Haur_1798"/>
<dbReference type="eggNOG" id="COG1742">
    <property type="taxonomic scope" value="Bacteria"/>
</dbReference>
<dbReference type="HOGENOM" id="CLU_117653_0_1_0"/>
<dbReference type="InParanoid" id="A9B7R3"/>
<dbReference type="BioCyc" id="HAUR316274:GHYA-1826-MONOMER"/>
<dbReference type="Proteomes" id="UP000000787">
    <property type="component" value="Chromosome"/>
</dbReference>
<dbReference type="GO" id="GO:0005886">
    <property type="term" value="C:plasma membrane"/>
    <property type="evidence" value="ECO:0007669"/>
    <property type="project" value="UniProtKB-SubCell"/>
</dbReference>
<dbReference type="Gene3D" id="1.10.3730.20">
    <property type="match status" value="1"/>
</dbReference>
<dbReference type="HAMAP" id="MF_00010">
    <property type="entry name" value="UPF0060"/>
    <property type="match status" value="1"/>
</dbReference>
<dbReference type="InterPro" id="IPR003844">
    <property type="entry name" value="UPF0060"/>
</dbReference>
<dbReference type="NCBIfam" id="NF002586">
    <property type="entry name" value="PRK02237.1"/>
    <property type="match status" value="1"/>
</dbReference>
<dbReference type="PANTHER" id="PTHR36116">
    <property type="entry name" value="UPF0060 MEMBRANE PROTEIN YNFA"/>
    <property type="match status" value="1"/>
</dbReference>
<dbReference type="PANTHER" id="PTHR36116:SF1">
    <property type="entry name" value="UPF0060 MEMBRANE PROTEIN YNFA"/>
    <property type="match status" value="1"/>
</dbReference>
<dbReference type="Pfam" id="PF02694">
    <property type="entry name" value="UPF0060"/>
    <property type="match status" value="1"/>
</dbReference>
<dbReference type="SUPFAM" id="SSF103481">
    <property type="entry name" value="Multidrug resistance efflux transporter EmrE"/>
    <property type="match status" value="1"/>
</dbReference>
<feature type="chain" id="PRO_1000089244" description="UPF0060 membrane protein Haur_1798">
    <location>
        <begin position="1"/>
        <end position="110"/>
    </location>
</feature>
<feature type="transmembrane region" description="Helical" evidence="1">
    <location>
        <begin position="7"/>
        <end position="27"/>
    </location>
</feature>
<feature type="transmembrane region" description="Helical" evidence="1">
    <location>
        <begin position="33"/>
        <end position="53"/>
    </location>
</feature>
<feature type="transmembrane region" description="Helical" evidence="1">
    <location>
        <begin position="63"/>
        <end position="83"/>
    </location>
</feature>
<feature type="transmembrane region" description="Helical" evidence="1">
    <location>
        <begin position="89"/>
        <end position="109"/>
    </location>
</feature>
<gene>
    <name type="ordered locus">Haur_1798</name>
</gene>
<keyword id="KW-1003">Cell membrane</keyword>
<keyword id="KW-0472">Membrane</keyword>
<keyword id="KW-0812">Transmembrane</keyword>
<keyword id="KW-1133">Transmembrane helix</keyword>
<protein>
    <recommendedName>
        <fullName evidence="1">UPF0060 membrane protein Haur_1798</fullName>
    </recommendedName>
</protein>
<proteinExistence type="inferred from homology"/>
<comment type="subcellular location">
    <subcellularLocation>
        <location evidence="1">Cell membrane</location>
        <topology evidence="1">Multi-pass membrane protein</topology>
    </subcellularLocation>
</comment>
<comment type="similarity">
    <text evidence="1">Belongs to the UPF0060 family.</text>
</comment>
<reference key="1">
    <citation type="journal article" date="2011" name="Stand. Genomic Sci.">
        <title>Complete genome sequence of the filamentous gliding predatory bacterium Herpetosiphon aurantiacus type strain (114-95(T)).</title>
        <authorList>
            <person name="Kiss H."/>
            <person name="Nett M."/>
            <person name="Domin N."/>
            <person name="Martin K."/>
            <person name="Maresca J.A."/>
            <person name="Copeland A."/>
            <person name="Lapidus A."/>
            <person name="Lucas S."/>
            <person name="Berry K.W."/>
            <person name="Glavina Del Rio T."/>
            <person name="Dalin E."/>
            <person name="Tice H."/>
            <person name="Pitluck S."/>
            <person name="Richardson P."/>
            <person name="Bruce D."/>
            <person name="Goodwin L."/>
            <person name="Han C."/>
            <person name="Detter J.C."/>
            <person name="Schmutz J."/>
            <person name="Brettin T."/>
            <person name="Land M."/>
            <person name="Hauser L."/>
            <person name="Kyrpides N.C."/>
            <person name="Ivanova N."/>
            <person name="Goeker M."/>
            <person name="Woyke T."/>
            <person name="Klenk H.P."/>
            <person name="Bryant D.A."/>
        </authorList>
    </citation>
    <scope>NUCLEOTIDE SEQUENCE [LARGE SCALE GENOMIC DNA]</scope>
    <source>
        <strain>ATCC 23779 / DSM 785 / 114-95</strain>
    </source>
</reference>
<accession>A9B7R3</accession>
<organism>
    <name type="scientific">Herpetosiphon aurantiacus (strain ATCC 23779 / DSM 785 / 114-95)</name>
    <dbReference type="NCBI Taxonomy" id="316274"/>
    <lineage>
        <taxon>Bacteria</taxon>
        <taxon>Bacillati</taxon>
        <taxon>Chloroflexota</taxon>
        <taxon>Chloroflexia</taxon>
        <taxon>Herpetosiphonales</taxon>
        <taxon>Herpetosiphonaceae</taxon>
        <taxon>Herpetosiphon</taxon>
    </lineage>
</organism>
<sequence length="110" mass="12118">MQVFRAVVLFILAGLAEIAGGYLVWQWLRADRSIWFGVLGAILLVGYGFLPTLQPQVWSFGRVYAAYGGVFIVLSLAWGWLIDHNPPDQPSLVGACLALVGAAIILYWPR</sequence>
<name>Y1798_HERA2</name>
<evidence type="ECO:0000255" key="1">
    <source>
        <dbReference type="HAMAP-Rule" id="MF_00010"/>
    </source>
</evidence>